<evidence type="ECO:0000255" key="1">
    <source>
        <dbReference type="HAMAP-Rule" id="MF_01306"/>
    </source>
</evidence>
<evidence type="ECO:0000256" key="2">
    <source>
        <dbReference type="SAM" id="MobiDB-lite"/>
    </source>
</evidence>
<evidence type="ECO:0000305" key="3"/>
<proteinExistence type="inferred from homology"/>
<keyword id="KW-1185">Reference proteome</keyword>
<keyword id="KW-0687">Ribonucleoprotein</keyword>
<keyword id="KW-0689">Ribosomal protein</keyword>
<keyword id="KW-0694">RNA-binding</keyword>
<keyword id="KW-0699">rRNA-binding</keyword>
<accession>Q13TJ5</accession>
<organism>
    <name type="scientific">Paraburkholderia xenovorans (strain LB400)</name>
    <dbReference type="NCBI Taxonomy" id="266265"/>
    <lineage>
        <taxon>Bacteria</taxon>
        <taxon>Pseudomonadati</taxon>
        <taxon>Pseudomonadota</taxon>
        <taxon>Betaproteobacteria</taxon>
        <taxon>Burkholderiales</taxon>
        <taxon>Burkholderiaceae</taxon>
        <taxon>Paraburkholderia</taxon>
    </lineage>
</organism>
<gene>
    <name evidence="1" type="primary">rpsD</name>
    <name type="ordered locus">Bxeno_A4056</name>
    <name type="ORF">Bxe_A0339</name>
</gene>
<sequence>MARYIGPKAKLSRREGTDLFLKSARRSLADKCKLDSKPGQHGRTSGARTSDYGTQLREKQKVKRIYGVLERQFRRYFAEADRLKGNTGENLLQLLESRLDNVVYRMGFGSTRAEARQLVSHKAIMVNGVVSNIPSMQVKAGDVVAVREQKKKQARILEALSLAEQGGLPSWVAVDSKKFEGTFKQKPERSDIAGDINESLIVELYSR</sequence>
<dbReference type="EMBL" id="CP000270">
    <property type="protein sequence ID" value="ABE32594.1"/>
    <property type="molecule type" value="Genomic_DNA"/>
</dbReference>
<dbReference type="RefSeq" id="WP_011490048.1">
    <property type="nucleotide sequence ID" value="NZ_CP008760.1"/>
</dbReference>
<dbReference type="SMR" id="Q13TJ5"/>
<dbReference type="STRING" id="266265.Bxe_A0339"/>
<dbReference type="KEGG" id="bxb:DR64_2509"/>
<dbReference type="KEGG" id="bxe:Bxe_A0339"/>
<dbReference type="PATRIC" id="fig|266265.5.peg.4286"/>
<dbReference type="eggNOG" id="COG0522">
    <property type="taxonomic scope" value="Bacteria"/>
</dbReference>
<dbReference type="OrthoDB" id="9803672at2"/>
<dbReference type="Proteomes" id="UP000001817">
    <property type="component" value="Chromosome 1"/>
</dbReference>
<dbReference type="GO" id="GO:0015935">
    <property type="term" value="C:small ribosomal subunit"/>
    <property type="evidence" value="ECO:0007669"/>
    <property type="project" value="InterPro"/>
</dbReference>
<dbReference type="GO" id="GO:0019843">
    <property type="term" value="F:rRNA binding"/>
    <property type="evidence" value="ECO:0007669"/>
    <property type="project" value="UniProtKB-UniRule"/>
</dbReference>
<dbReference type="GO" id="GO:0003735">
    <property type="term" value="F:structural constituent of ribosome"/>
    <property type="evidence" value="ECO:0007669"/>
    <property type="project" value="InterPro"/>
</dbReference>
<dbReference type="GO" id="GO:0042274">
    <property type="term" value="P:ribosomal small subunit biogenesis"/>
    <property type="evidence" value="ECO:0007669"/>
    <property type="project" value="TreeGrafter"/>
</dbReference>
<dbReference type="GO" id="GO:0006412">
    <property type="term" value="P:translation"/>
    <property type="evidence" value="ECO:0007669"/>
    <property type="project" value="UniProtKB-UniRule"/>
</dbReference>
<dbReference type="CDD" id="cd00165">
    <property type="entry name" value="S4"/>
    <property type="match status" value="1"/>
</dbReference>
<dbReference type="FunFam" id="1.10.1050.10:FF:000001">
    <property type="entry name" value="30S ribosomal protein S4"/>
    <property type="match status" value="1"/>
</dbReference>
<dbReference type="FunFam" id="3.10.290.10:FF:000001">
    <property type="entry name" value="30S ribosomal protein S4"/>
    <property type="match status" value="1"/>
</dbReference>
<dbReference type="Gene3D" id="1.10.1050.10">
    <property type="entry name" value="Ribosomal Protein S4 Delta 41, Chain A, domain 1"/>
    <property type="match status" value="1"/>
</dbReference>
<dbReference type="Gene3D" id="3.10.290.10">
    <property type="entry name" value="RNA-binding S4 domain"/>
    <property type="match status" value="1"/>
</dbReference>
<dbReference type="HAMAP" id="MF_01306_B">
    <property type="entry name" value="Ribosomal_uS4_B"/>
    <property type="match status" value="1"/>
</dbReference>
<dbReference type="InterPro" id="IPR022801">
    <property type="entry name" value="Ribosomal_uS4"/>
</dbReference>
<dbReference type="InterPro" id="IPR005709">
    <property type="entry name" value="Ribosomal_uS4_bac-type"/>
</dbReference>
<dbReference type="InterPro" id="IPR018079">
    <property type="entry name" value="Ribosomal_uS4_CS"/>
</dbReference>
<dbReference type="InterPro" id="IPR001912">
    <property type="entry name" value="Ribosomal_uS4_N"/>
</dbReference>
<dbReference type="InterPro" id="IPR002942">
    <property type="entry name" value="S4_RNA-bd"/>
</dbReference>
<dbReference type="InterPro" id="IPR036986">
    <property type="entry name" value="S4_RNA-bd_sf"/>
</dbReference>
<dbReference type="NCBIfam" id="NF003717">
    <property type="entry name" value="PRK05327.1"/>
    <property type="match status" value="1"/>
</dbReference>
<dbReference type="NCBIfam" id="TIGR01017">
    <property type="entry name" value="rpsD_bact"/>
    <property type="match status" value="1"/>
</dbReference>
<dbReference type="PANTHER" id="PTHR11831">
    <property type="entry name" value="30S 40S RIBOSOMAL PROTEIN"/>
    <property type="match status" value="1"/>
</dbReference>
<dbReference type="PANTHER" id="PTHR11831:SF4">
    <property type="entry name" value="SMALL RIBOSOMAL SUBUNIT PROTEIN US4M"/>
    <property type="match status" value="1"/>
</dbReference>
<dbReference type="Pfam" id="PF00163">
    <property type="entry name" value="Ribosomal_S4"/>
    <property type="match status" value="1"/>
</dbReference>
<dbReference type="Pfam" id="PF01479">
    <property type="entry name" value="S4"/>
    <property type="match status" value="1"/>
</dbReference>
<dbReference type="SMART" id="SM01390">
    <property type="entry name" value="Ribosomal_S4"/>
    <property type="match status" value="1"/>
</dbReference>
<dbReference type="SMART" id="SM00363">
    <property type="entry name" value="S4"/>
    <property type="match status" value="1"/>
</dbReference>
<dbReference type="SUPFAM" id="SSF55174">
    <property type="entry name" value="Alpha-L RNA-binding motif"/>
    <property type="match status" value="1"/>
</dbReference>
<dbReference type="PROSITE" id="PS00632">
    <property type="entry name" value="RIBOSOMAL_S4"/>
    <property type="match status" value="1"/>
</dbReference>
<dbReference type="PROSITE" id="PS50889">
    <property type="entry name" value="S4"/>
    <property type="match status" value="1"/>
</dbReference>
<comment type="function">
    <text evidence="1">One of the primary rRNA binding proteins, it binds directly to 16S rRNA where it nucleates assembly of the body of the 30S subunit.</text>
</comment>
<comment type="function">
    <text evidence="1">With S5 and S12 plays an important role in translational accuracy.</text>
</comment>
<comment type="subunit">
    <text evidence="1">Part of the 30S ribosomal subunit. Contacts protein S5. The interaction surface between S4 and S5 is involved in control of translational fidelity.</text>
</comment>
<comment type="similarity">
    <text evidence="1">Belongs to the universal ribosomal protein uS4 family.</text>
</comment>
<feature type="chain" id="PRO_0000293253" description="Small ribosomal subunit protein uS4">
    <location>
        <begin position="1"/>
        <end position="207"/>
    </location>
</feature>
<feature type="domain" description="S4 RNA-binding" evidence="1">
    <location>
        <begin position="97"/>
        <end position="157"/>
    </location>
</feature>
<feature type="region of interest" description="Disordered" evidence="2">
    <location>
        <begin position="31"/>
        <end position="55"/>
    </location>
</feature>
<feature type="compositionally biased region" description="Polar residues" evidence="2">
    <location>
        <begin position="42"/>
        <end position="53"/>
    </location>
</feature>
<reference key="1">
    <citation type="journal article" date="2006" name="Proc. Natl. Acad. Sci. U.S.A.">
        <title>Burkholderia xenovorans LB400 harbors a multi-replicon, 9.73-Mbp genome shaped for versatility.</title>
        <authorList>
            <person name="Chain P.S.G."/>
            <person name="Denef V.J."/>
            <person name="Konstantinidis K.T."/>
            <person name="Vergez L.M."/>
            <person name="Agullo L."/>
            <person name="Reyes V.L."/>
            <person name="Hauser L."/>
            <person name="Cordova M."/>
            <person name="Gomez L."/>
            <person name="Gonzalez M."/>
            <person name="Land M."/>
            <person name="Lao V."/>
            <person name="Larimer F."/>
            <person name="LiPuma J.J."/>
            <person name="Mahenthiralingam E."/>
            <person name="Malfatti S.A."/>
            <person name="Marx C.J."/>
            <person name="Parnell J.J."/>
            <person name="Ramette A."/>
            <person name="Richardson P."/>
            <person name="Seeger M."/>
            <person name="Smith D."/>
            <person name="Spilker T."/>
            <person name="Sul W.J."/>
            <person name="Tsoi T.V."/>
            <person name="Ulrich L.E."/>
            <person name="Zhulin I.B."/>
            <person name="Tiedje J.M."/>
        </authorList>
    </citation>
    <scope>NUCLEOTIDE SEQUENCE [LARGE SCALE GENOMIC DNA]</scope>
    <source>
        <strain>LB400</strain>
    </source>
</reference>
<protein>
    <recommendedName>
        <fullName evidence="1">Small ribosomal subunit protein uS4</fullName>
    </recommendedName>
    <alternativeName>
        <fullName evidence="3">30S ribosomal protein S4</fullName>
    </alternativeName>
</protein>
<name>RS4_PARXL</name>